<comment type="function">
    <text evidence="1">Removes the pyruvyl group from chorismate, with concomitant aromatization of the ring, to provide 4-hydroxybenzoate (4HB) for the ubiquinone pathway.</text>
</comment>
<comment type="catalytic activity">
    <reaction evidence="1">
        <text>chorismate = 4-hydroxybenzoate + pyruvate</text>
        <dbReference type="Rhea" id="RHEA:16505"/>
        <dbReference type="ChEBI" id="CHEBI:15361"/>
        <dbReference type="ChEBI" id="CHEBI:17879"/>
        <dbReference type="ChEBI" id="CHEBI:29748"/>
        <dbReference type="EC" id="4.1.3.40"/>
    </reaction>
</comment>
<comment type="pathway">
    <text evidence="1">Cofactor biosynthesis; ubiquinone biosynthesis.</text>
</comment>
<comment type="subcellular location">
    <subcellularLocation>
        <location evidence="1">Cytoplasm</location>
    </subcellularLocation>
</comment>
<comment type="similarity">
    <text evidence="1">Belongs to the UbiC family.</text>
</comment>
<sequence>MNVTSLSFPYGESIQWFCADRTDKLPPSPLKEWLLAPGSLTKKLKTCCNQFEVKVLGEGQLAPFKDEYPQQGSVWVREVLLCLDNVPWVFARTLIPLSLLSEREADFLGLGSRPLGELLFSQDNFIPGRIEVASFDTGSRLAHLAASLDQRVEHLLWGRRRYFHHGQDEMIVSEIFLPAAERAICQ</sequence>
<name>UBIC_SHESW</name>
<proteinExistence type="inferred from homology"/>
<evidence type="ECO:0000255" key="1">
    <source>
        <dbReference type="HAMAP-Rule" id="MF_01632"/>
    </source>
</evidence>
<accession>A1RQ05</accession>
<organism>
    <name type="scientific">Shewanella sp. (strain W3-18-1)</name>
    <dbReference type="NCBI Taxonomy" id="351745"/>
    <lineage>
        <taxon>Bacteria</taxon>
        <taxon>Pseudomonadati</taxon>
        <taxon>Pseudomonadota</taxon>
        <taxon>Gammaproteobacteria</taxon>
        <taxon>Alteromonadales</taxon>
        <taxon>Shewanellaceae</taxon>
        <taxon>Shewanella</taxon>
    </lineage>
</organism>
<keyword id="KW-0963">Cytoplasm</keyword>
<keyword id="KW-0456">Lyase</keyword>
<keyword id="KW-0670">Pyruvate</keyword>
<keyword id="KW-0831">Ubiquinone biosynthesis</keyword>
<feature type="chain" id="PRO_0000292083" description="Probable chorismate pyruvate-lyase">
    <location>
        <begin position="1"/>
        <end position="186"/>
    </location>
</feature>
<feature type="binding site" evidence="1">
    <location>
        <position position="77"/>
    </location>
    <ligand>
        <name>substrate</name>
    </ligand>
</feature>
<feature type="binding site" evidence="1">
    <location>
        <position position="115"/>
    </location>
    <ligand>
        <name>substrate</name>
    </ligand>
</feature>
<feature type="binding site" evidence="1">
    <location>
        <position position="174"/>
    </location>
    <ligand>
        <name>substrate</name>
    </ligand>
</feature>
<reference key="1">
    <citation type="submission" date="2006-12" db="EMBL/GenBank/DDBJ databases">
        <title>Complete sequence of Shewanella sp. W3-18-1.</title>
        <authorList>
            <consortium name="US DOE Joint Genome Institute"/>
            <person name="Copeland A."/>
            <person name="Lucas S."/>
            <person name="Lapidus A."/>
            <person name="Barry K."/>
            <person name="Detter J.C."/>
            <person name="Glavina del Rio T."/>
            <person name="Hammon N."/>
            <person name="Israni S."/>
            <person name="Dalin E."/>
            <person name="Tice H."/>
            <person name="Pitluck S."/>
            <person name="Chain P."/>
            <person name="Malfatti S."/>
            <person name="Shin M."/>
            <person name="Vergez L."/>
            <person name="Schmutz J."/>
            <person name="Larimer F."/>
            <person name="Land M."/>
            <person name="Hauser L."/>
            <person name="Kyrpides N."/>
            <person name="Lykidis A."/>
            <person name="Tiedje J."/>
            <person name="Richardson P."/>
        </authorList>
    </citation>
    <scope>NUCLEOTIDE SEQUENCE [LARGE SCALE GENOMIC DNA]</scope>
    <source>
        <strain>W3-18-1</strain>
    </source>
</reference>
<dbReference type="EC" id="4.1.3.40" evidence="1"/>
<dbReference type="EMBL" id="CP000503">
    <property type="protein sequence ID" value="ABM26750.1"/>
    <property type="molecule type" value="Genomic_DNA"/>
</dbReference>
<dbReference type="RefSeq" id="WP_011791172.1">
    <property type="nucleotide sequence ID" value="NC_008750.1"/>
</dbReference>
<dbReference type="SMR" id="A1RQ05"/>
<dbReference type="KEGG" id="shw:Sputw3181_3946"/>
<dbReference type="HOGENOM" id="CLU_096824_1_1_6"/>
<dbReference type="UniPathway" id="UPA00232"/>
<dbReference type="Proteomes" id="UP000002597">
    <property type="component" value="Chromosome"/>
</dbReference>
<dbReference type="GO" id="GO:0005829">
    <property type="term" value="C:cytosol"/>
    <property type="evidence" value="ECO:0007669"/>
    <property type="project" value="TreeGrafter"/>
</dbReference>
<dbReference type="GO" id="GO:0008813">
    <property type="term" value="F:chorismate lyase activity"/>
    <property type="evidence" value="ECO:0007669"/>
    <property type="project" value="UniProtKB-UniRule"/>
</dbReference>
<dbReference type="GO" id="GO:0042866">
    <property type="term" value="P:pyruvate biosynthetic process"/>
    <property type="evidence" value="ECO:0007669"/>
    <property type="project" value="UniProtKB-UniRule"/>
</dbReference>
<dbReference type="GO" id="GO:0006744">
    <property type="term" value="P:ubiquinone biosynthetic process"/>
    <property type="evidence" value="ECO:0007669"/>
    <property type="project" value="UniProtKB-UniRule"/>
</dbReference>
<dbReference type="Gene3D" id="3.40.1410.10">
    <property type="entry name" value="Chorismate lyase-like"/>
    <property type="match status" value="1"/>
</dbReference>
<dbReference type="HAMAP" id="MF_01632">
    <property type="entry name" value="UbiC"/>
    <property type="match status" value="1"/>
</dbReference>
<dbReference type="InterPro" id="IPR007440">
    <property type="entry name" value="Chorismate--pyruvate_lyase"/>
</dbReference>
<dbReference type="InterPro" id="IPR028978">
    <property type="entry name" value="Chorismate_lyase_/UTRA_dom_sf"/>
</dbReference>
<dbReference type="PANTHER" id="PTHR38683">
    <property type="entry name" value="CHORISMATE PYRUVATE-LYASE"/>
    <property type="match status" value="1"/>
</dbReference>
<dbReference type="PANTHER" id="PTHR38683:SF1">
    <property type="entry name" value="CHORISMATE PYRUVATE-LYASE"/>
    <property type="match status" value="1"/>
</dbReference>
<dbReference type="Pfam" id="PF04345">
    <property type="entry name" value="Chor_lyase"/>
    <property type="match status" value="1"/>
</dbReference>
<dbReference type="SUPFAM" id="SSF64288">
    <property type="entry name" value="Chorismate lyase-like"/>
    <property type="match status" value="1"/>
</dbReference>
<gene>
    <name evidence="1" type="primary">ubiC</name>
    <name type="ordered locus">Sputw3181_3946</name>
</gene>
<protein>
    <recommendedName>
        <fullName evidence="1">Probable chorismate pyruvate-lyase</fullName>
        <shortName evidence="1">CL</shortName>
        <shortName evidence="1">CPL</shortName>
        <ecNumber evidence="1">4.1.3.40</ecNumber>
    </recommendedName>
</protein>